<name>HRCA_STAAS</name>
<dbReference type="EMBL" id="BX571857">
    <property type="protein sequence ID" value="CAG43321.1"/>
    <property type="molecule type" value="Genomic_DNA"/>
</dbReference>
<dbReference type="RefSeq" id="WP_000627140.1">
    <property type="nucleotide sequence ID" value="NC_002953.3"/>
</dbReference>
<dbReference type="SMR" id="Q6G8Y5"/>
<dbReference type="KEGG" id="sas:SAS1520"/>
<dbReference type="HOGENOM" id="CLU_050019_1_0_9"/>
<dbReference type="GO" id="GO:0003677">
    <property type="term" value="F:DNA binding"/>
    <property type="evidence" value="ECO:0007669"/>
    <property type="project" value="InterPro"/>
</dbReference>
<dbReference type="GO" id="GO:0045892">
    <property type="term" value="P:negative regulation of DNA-templated transcription"/>
    <property type="evidence" value="ECO:0007669"/>
    <property type="project" value="UniProtKB-UniRule"/>
</dbReference>
<dbReference type="FunFam" id="1.10.10.10:FF:000049">
    <property type="entry name" value="Heat-inducible transcription repressor HrcA"/>
    <property type="match status" value="1"/>
</dbReference>
<dbReference type="Gene3D" id="3.30.450.40">
    <property type="match status" value="1"/>
</dbReference>
<dbReference type="Gene3D" id="3.30.390.60">
    <property type="entry name" value="Heat-inducible transcription repressor hrca homolog, domain 3"/>
    <property type="match status" value="1"/>
</dbReference>
<dbReference type="Gene3D" id="1.10.10.10">
    <property type="entry name" value="Winged helix-like DNA-binding domain superfamily/Winged helix DNA-binding domain"/>
    <property type="match status" value="1"/>
</dbReference>
<dbReference type="HAMAP" id="MF_00081">
    <property type="entry name" value="HrcA"/>
    <property type="match status" value="1"/>
</dbReference>
<dbReference type="InterPro" id="IPR029016">
    <property type="entry name" value="GAF-like_dom_sf"/>
</dbReference>
<dbReference type="InterPro" id="IPR002571">
    <property type="entry name" value="HrcA"/>
</dbReference>
<dbReference type="InterPro" id="IPR021153">
    <property type="entry name" value="HrcA_C"/>
</dbReference>
<dbReference type="InterPro" id="IPR036388">
    <property type="entry name" value="WH-like_DNA-bd_sf"/>
</dbReference>
<dbReference type="InterPro" id="IPR036390">
    <property type="entry name" value="WH_DNA-bd_sf"/>
</dbReference>
<dbReference type="InterPro" id="IPR023120">
    <property type="entry name" value="WHTH_transcript_rep_HrcA_IDD"/>
</dbReference>
<dbReference type="NCBIfam" id="TIGR00331">
    <property type="entry name" value="hrcA"/>
    <property type="match status" value="1"/>
</dbReference>
<dbReference type="PANTHER" id="PTHR34824">
    <property type="entry name" value="HEAT-INDUCIBLE TRANSCRIPTION REPRESSOR HRCA"/>
    <property type="match status" value="1"/>
</dbReference>
<dbReference type="PANTHER" id="PTHR34824:SF1">
    <property type="entry name" value="HEAT-INDUCIBLE TRANSCRIPTION REPRESSOR HRCA"/>
    <property type="match status" value="1"/>
</dbReference>
<dbReference type="Pfam" id="PF01628">
    <property type="entry name" value="HrcA"/>
    <property type="match status" value="1"/>
</dbReference>
<dbReference type="PIRSF" id="PIRSF005485">
    <property type="entry name" value="HrcA"/>
    <property type="match status" value="1"/>
</dbReference>
<dbReference type="SUPFAM" id="SSF55781">
    <property type="entry name" value="GAF domain-like"/>
    <property type="match status" value="1"/>
</dbReference>
<dbReference type="SUPFAM" id="SSF46785">
    <property type="entry name" value="Winged helix' DNA-binding domain"/>
    <property type="match status" value="1"/>
</dbReference>
<comment type="function">
    <text evidence="1">Negative regulator of class I heat shock genes (grpE-dnaK-dnaJ and groELS operons). Prevents heat-shock induction of these operons.</text>
</comment>
<comment type="similarity">
    <text evidence="1">Belongs to the HrcA family.</text>
</comment>
<sequence>MITDRQLSILNAIVEDYVDFGQPVGSKTLIERHNLNVSPATIRNEMKQLEDLNYIEKTHSSSGRSPSQLGFRYYVNRLLEQTSHQKTNKLRRLNQLLVENQYDVSSALTYFADELSNISQYTTLVVHPNHKQDIINNVHLIRANPNLVIMVIVFSSGHVEHVHLASDIPFNNDKLNTISNFVTNKLTEFNQNLQDDIVSFVQSEQEEIFINKLLNTMNNHISNQSNSIYMGGKVKLIDALNESNVSSIQPILQYIESNRIAELLQDISSPNINVKIGNEIDDSLSDISIVTSQYHFDETLKGQIAVIGPTAMHYQNVIQLLNRIW</sequence>
<evidence type="ECO:0000255" key="1">
    <source>
        <dbReference type="HAMAP-Rule" id="MF_00081"/>
    </source>
</evidence>
<accession>Q6G8Y5</accession>
<gene>
    <name evidence="1" type="primary">hrcA</name>
    <name type="ordered locus">SAS1520</name>
</gene>
<organism>
    <name type="scientific">Staphylococcus aureus (strain MSSA476)</name>
    <dbReference type="NCBI Taxonomy" id="282459"/>
    <lineage>
        <taxon>Bacteria</taxon>
        <taxon>Bacillati</taxon>
        <taxon>Bacillota</taxon>
        <taxon>Bacilli</taxon>
        <taxon>Bacillales</taxon>
        <taxon>Staphylococcaceae</taxon>
        <taxon>Staphylococcus</taxon>
    </lineage>
</organism>
<keyword id="KW-0678">Repressor</keyword>
<keyword id="KW-0346">Stress response</keyword>
<keyword id="KW-0804">Transcription</keyword>
<keyword id="KW-0805">Transcription regulation</keyword>
<reference key="1">
    <citation type="journal article" date="2004" name="Proc. Natl. Acad. Sci. U.S.A.">
        <title>Complete genomes of two clinical Staphylococcus aureus strains: evidence for the rapid evolution of virulence and drug resistance.</title>
        <authorList>
            <person name="Holden M.T.G."/>
            <person name="Feil E.J."/>
            <person name="Lindsay J.A."/>
            <person name="Peacock S.J."/>
            <person name="Day N.P.J."/>
            <person name="Enright M.C."/>
            <person name="Foster T.J."/>
            <person name="Moore C.E."/>
            <person name="Hurst L."/>
            <person name="Atkin R."/>
            <person name="Barron A."/>
            <person name="Bason N."/>
            <person name="Bentley S.D."/>
            <person name="Chillingworth C."/>
            <person name="Chillingworth T."/>
            <person name="Churcher C."/>
            <person name="Clark L."/>
            <person name="Corton C."/>
            <person name="Cronin A."/>
            <person name="Doggett J."/>
            <person name="Dowd L."/>
            <person name="Feltwell T."/>
            <person name="Hance Z."/>
            <person name="Harris B."/>
            <person name="Hauser H."/>
            <person name="Holroyd S."/>
            <person name="Jagels K."/>
            <person name="James K.D."/>
            <person name="Lennard N."/>
            <person name="Line A."/>
            <person name="Mayes R."/>
            <person name="Moule S."/>
            <person name="Mungall K."/>
            <person name="Ormond D."/>
            <person name="Quail M.A."/>
            <person name="Rabbinowitsch E."/>
            <person name="Rutherford K.M."/>
            <person name="Sanders M."/>
            <person name="Sharp S."/>
            <person name="Simmonds M."/>
            <person name="Stevens K."/>
            <person name="Whitehead S."/>
            <person name="Barrell B.G."/>
            <person name="Spratt B.G."/>
            <person name="Parkhill J."/>
        </authorList>
    </citation>
    <scope>NUCLEOTIDE SEQUENCE [LARGE SCALE GENOMIC DNA]</scope>
    <source>
        <strain>MSSA476</strain>
    </source>
</reference>
<feature type="chain" id="PRO_0000182529" description="Heat-inducible transcription repressor HrcA">
    <location>
        <begin position="1"/>
        <end position="325"/>
    </location>
</feature>
<protein>
    <recommendedName>
        <fullName evidence="1">Heat-inducible transcription repressor HrcA</fullName>
    </recommendedName>
</protein>
<proteinExistence type="inferred from homology"/>